<feature type="chain" id="PRO_0000376790" description="N-acetyldiaminopimelate deacetylase">
    <location>
        <begin position="1"/>
        <end position="375"/>
    </location>
</feature>
<feature type="active site" evidence="1">
    <location>
        <position position="69"/>
    </location>
</feature>
<feature type="active site" description="Proton acceptor" evidence="1">
    <location>
        <position position="128"/>
    </location>
</feature>
<keyword id="KW-0028">Amino-acid biosynthesis</keyword>
<keyword id="KW-0220">Diaminopimelate biosynthesis</keyword>
<keyword id="KW-0378">Hydrolase</keyword>
<keyword id="KW-0457">Lysine biosynthesis</keyword>
<dbReference type="EC" id="3.5.1.47" evidence="1"/>
<dbReference type="EMBL" id="CP000407">
    <property type="protein sequence ID" value="ABP91010.1"/>
    <property type="molecule type" value="Genomic_DNA"/>
</dbReference>
<dbReference type="SMR" id="A4VY21"/>
<dbReference type="STRING" id="391295.SSU05_2044"/>
<dbReference type="KEGG" id="ssu:SSU05_2044"/>
<dbReference type="eggNOG" id="COG1473">
    <property type="taxonomic scope" value="Bacteria"/>
</dbReference>
<dbReference type="HOGENOM" id="CLU_023257_0_1_9"/>
<dbReference type="BioCyc" id="SSUI391295:GHI8-2100-MONOMER"/>
<dbReference type="UniPathway" id="UPA00034">
    <property type="reaction ID" value="UER00024"/>
</dbReference>
<dbReference type="GO" id="GO:0050118">
    <property type="term" value="F:N-acetyldiaminopimelate deacetylase activity"/>
    <property type="evidence" value="ECO:0007669"/>
    <property type="project" value="UniProtKB-UniRule"/>
</dbReference>
<dbReference type="GO" id="GO:0019877">
    <property type="term" value="P:diaminopimelate biosynthetic process"/>
    <property type="evidence" value="ECO:0007669"/>
    <property type="project" value="UniProtKB-UniRule"/>
</dbReference>
<dbReference type="GO" id="GO:0009089">
    <property type="term" value="P:lysine biosynthetic process via diaminopimelate"/>
    <property type="evidence" value="ECO:0007669"/>
    <property type="project" value="UniProtKB-UniRule"/>
</dbReference>
<dbReference type="CDD" id="cd05670">
    <property type="entry name" value="M20_Acy1_YkuR-like"/>
    <property type="match status" value="1"/>
</dbReference>
<dbReference type="FunFam" id="3.30.70.360:FF:000001">
    <property type="entry name" value="N-acetyldiaminopimelate deacetylase"/>
    <property type="match status" value="1"/>
</dbReference>
<dbReference type="Gene3D" id="3.30.70.360">
    <property type="match status" value="1"/>
</dbReference>
<dbReference type="Gene3D" id="3.40.630.10">
    <property type="entry name" value="Zn peptidases"/>
    <property type="match status" value="1"/>
</dbReference>
<dbReference type="HAMAP" id="MF_01692">
    <property type="entry name" value="DapEL"/>
    <property type="match status" value="1"/>
</dbReference>
<dbReference type="InterPro" id="IPR023905">
    <property type="entry name" value="AcetylDAP_deacetylase"/>
</dbReference>
<dbReference type="InterPro" id="IPR017439">
    <property type="entry name" value="Amidohydrolase"/>
</dbReference>
<dbReference type="InterPro" id="IPR036264">
    <property type="entry name" value="Bact_exopeptidase_dim_dom"/>
</dbReference>
<dbReference type="InterPro" id="IPR002933">
    <property type="entry name" value="Peptidase_M20"/>
</dbReference>
<dbReference type="InterPro" id="IPR011650">
    <property type="entry name" value="Peptidase_M20_dimer"/>
</dbReference>
<dbReference type="NCBIfam" id="TIGR01891">
    <property type="entry name" value="amidohydrolases"/>
    <property type="match status" value="1"/>
</dbReference>
<dbReference type="PANTHER" id="PTHR11014:SF98">
    <property type="entry name" value="N-ACETYLDIAMINOPIMELATE DEACETYLASE"/>
    <property type="match status" value="1"/>
</dbReference>
<dbReference type="PANTHER" id="PTHR11014">
    <property type="entry name" value="PEPTIDASE M20 FAMILY MEMBER"/>
    <property type="match status" value="1"/>
</dbReference>
<dbReference type="Pfam" id="PF07687">
    <property type="entry name" value="M20_dimer"/>
    <property type="match status" value="1"/>
</dbReference>
<dbReference type="Pfam" id="PF01546">
    <property type="entry name" value="Peptidase_M20"/>
    <property type="match status" value="1"/>
</dbReference>
<dbReference type="PIRSF" id="PIRSF005962">
    <property type="entry name" value="Pept_M20D_amidohydro"/>
    <property type="match status" value="1"/>
</dbReference>
<dbReference type="SUPFAM" id="SSF55031">
    <property type="entry name" value="Bacterial exopeptidase dimerisation domain"/>
    <property type="match status" value="1"/>
</dbReference>
<dbReference type="SUPFAM" id="SSF53187">
    <property type="entry name" value="Zn-dependent exopeptidases"/>
    <property type="match status" value="1"/>
</dbReference>
<gene>
    <name type="ordered locus">SSU05_2044</name>
</gene>
<organism>
    <name type="scientific">Streptococcus suis (strain 05ZYH33)</name>
    <dbReference type="NCBI Taxonomy" id="391295"/>
    <lineage>
        <taxon>Bacteria</taxon>
        <taxon>Bacillati</taxon>
        <taxon>Bacillota</taxon>
        <taxon>Bacilli</taxon>
        <taxon>Lactobacillales</taxon>
        <taxon>Streptococcaceae</taxon>
        <taxon>Streptococcus</taxon>
    </lineage>
</organism>
<protein>
    <recommendedName>
        <fullName evidence="1">N-acetyldiaminopimelate deacetylase</fullName>
        <ecNumber evidence="1">3.5.1.47</ecNumber>
    </recommendedName>
</protein>
<reference key="1">
    <citation type="journal article" date="2007" name="PLoS ONE">
        <title>A glimpse of streptococcal toxic shock syndrome from comparative genomics of S. suis 2 Chinese isolates.</title>
        <authorList>
            <person name="Chen C."/>
            <person name="Tang J."/>
            <person name="Dong W."/>
            <person name="Wang C."/>
            <person name="Feng Y."/>
            <person name="Wang J."/>
            <person name="Zheng F."/>
            <person name="Pan X."/>
            <person name="Liu D."/>
            <person name="Li M."/>
            <person name="Song Y."/>
            <person name="Zhu X."/>
            <person name="Sun H."/>
            <person name="Feng T."/>
            <person name="Guo Z."/>
            <person name="Ju A."/>
            <person name="Ge J."/>
            <person name="Dong Y."/>
            <person name="Sun W."/>
            <person name="Jiang Y."/>
            <person name="Wang J."/>
            <person name="Yan J."/>
            <person name="Yang H."/>
            <person name="Wang X."/>
            <person name="Gao G.F."/>
            <person name="Yang R."/>
            <person name="Wang J."/>
            <person name="Yu J."/>
        </authorList>
    </citation>
    <scope>NUCLEOTIDE SEQUENCE [LARGE SCALE GENOMIC DNA]</scope>
    <source>
        <strain>05ZYH33</strain>
    </source>
</reference>
<proteinExistence type="inferred from homology"/>
<sequence length="375" mass="41412">MLDLIATRRALHQIPELGMEEFKTHAFLMETIEGLLQDCSFAQVRTWKTGILVYLTGSAPEKTIGWRADIDGLPIVEETGLDFKSLHPDRMHACGHDFHMTIALGLLEKMAEQQPRNNLLFLFQPAEENLAGGMLMYEAGAFGDWLPDEFYGLHVRPDLKVGQMATNRATLFAGTCEVKIRFTGKGGHAAFPYTANDALVAASYFVTQVQSVVSRNVDPIEGAVVTFGSMHAGTTNNVIAETAFLHGTIRALTQNMSLLVQKRVREVAEGIALSFGVDLEIELNPSGYLPVENNPQLADELMTYFDGIDGVEMIDCPPAMTGEDFGYLLNKVPGVMFWLGVDTPYPLHNPRLSPKEEVLPFAVDKLSDFLKMKAN</sequence>
<name>DAPEL_STRSY</name>
<evidence type="ECO:0000255" key="1">
    <source>
        <dbReference type="HAMAP-Rule" id="MF_01692"/>
    </source>
</evidence>
<accession>A4VY21</accession>
<comment type="function">
    <text evidence="1">Catalyzes the conversion of N-acetyl-diaminopimelate to diaminopimelate and acetate.</text>
</comment>
<comment type="catalytic activity">
    <reaction evidence="1">
        <text>N-acetyl-(2S,6S)-2,6-diaminopimelate + H2O = (2S,6S)-2,6-diaminopimelate + acetate</text>
        <dbReference type="Rhea" id="RHEA:20405"/>
        <dbReference type="ChEBI" id="CHEBI:15377"/>
        <dbReference type="ChEBI" id="CHEBI:30089"/>
        <dbReference type="ChEBI" id="CHEBI:57609"/>
        <dbReference type="ChEBI" id="CHEBI:58767"/>
        <dbReference type="EC" id="3.5.1.47"/>
    </reaction>
</comment>
<comment type="pathway">
    <text evidence="1">Amino-acid biosynthesis; L-lysine biosynthesis via DAP pathway; LL-2,6-diaminopimelate from (S)-tetrahydrodipicolinate (acetylase route): step 3/3.</text>
</comment>
<comment type="similarity">
    <text evidence="1">Belongs to the peptidase M20A family. N-acetyldiaminopimelate deacetylase subfamily.</text>
</comment>